<accession>P08036</accession>
<feature type="chain" id="PRO_0000048046" description="DNA-directed RNA polymerase subunit beta">
    <location>
        <begin position="1" status="less than"/>
        <end position="417" status="greater than"/>
    </location>
</feature>
<feature type="non-terminal residue">
    <location>
        <position position="1"/>
    </location>
</feature>
<feature type="non-terminal residue">
    <location>
        <position position="417"/>
    </location>
</feature>
<comment type="function">
    <text evidence="1">DNA-dependent RNA polymerase catalyzes the transcription of DNA into RNA using the four ribonucleoside triphosphates as substrates.</text>
</comment>
<comment type="catalytic activity">
    <reaction>
        <text>RNA(n) + a ribonucleoside 5'-triphosphate = RNA(n+1) + diphosphate</text>
        <dbReference type="Rhea" id="RHEA:21248"/>
        <dbReference type="Rhea" id="RHEA-COMP:14527"/>
        <dbReference type="Rhea" id="RHEA-COMP:17342"/>
        <dbReference type="ChEBI" id="CHEBI:33019"/>
        <dbReference type="ChEBI" id="CHEBI:61557"/>
        <dbReference type="ChEBI" id="CHEBI:140395"/>
        <dbReference type="EC" id="2.7.7.6"/>
    </reaction>
</comment>
<comment type="subunit">
    <text evidence="1">In plastids the minimal PEP RNA polymerase catalytic core is composed of four subunits: alpha, beta, beta', and beta''. When a (nuclear-encoded) sigma factor is associated with the core the holoenzyme is formed, which can initiate transcription (By similarity).</text>
</comment>
<comment type="subcellular location">
    <subcellularLocation>
        <location>Plastid</location>
        <location>Chloroplast</location>
    </subcellularLocation>
</comment>
<comment type="similarity">
    <text evidence="2">Belongs to the RNA polymerase beta chain family.</text>
</comment>
<evidence type="ECO:0000250" key="1"/>
<evidence type="ECO:0000305" key="2"/>
<geneLocation type="chloroplast"/>
<organism>
    <name type="scientific">Saponaria officinalis</name>
    <name type="common">Common soapwort</name>
    <name type="synonym">Lychnis saponaria</name>
    <dbReference type="NCBI Taxonomy" id="3572"/>
    <lineage>
        <taxon>Eukaryota</taxon>
        <taxon>Viridiplantae</taxon>
        <taxon>Streptophyta</taxon>
        <taxon>Embryophyta</taxon>
        <taxon>Tracheophyta</taxon>
        <taxon>Spermatophyta</taxon>
        <taxon>Magnoliopsida</taxon>
        <taxon>eudicotyledons</taxon>
        <taxon>Gunneridae</taxon>
        <taxon>Pentapetalae</taxon>
        <taxon>Caryophyllales</taxon>
        <taxon>Caryophyllaceae</taxon>
        <taxon>Caryophylleae</taxon>
        <taxon>Saponaria</taxon>
    </lineage>
</organism>
<reference key="1">
    <citation type="journal article" date="1988" name="Nucleic Acids Res.">
        <title>A DNA sequence from Saponaria officinalis is similar to various RNA polymerase genes.</title>
        <authorList>
            <person name="Benatti L."/>
            <person name="Lorenzetti R."/>
            <person name="Dani M."/>
            <person name="Martini D."/>
            <person name="Minganti C."/>
            <person name="Sasano M."/>
            <person name="Sidoli A."/>
            <person name="Soria M."/>
        </authorList>
    </citation>
    <scope>NUCLEOTIDE SEQUENCE [GENOMIC DNA]</scope>
    <source>
        <tissue>Leaf</tissue>
    </source>
</reference>
<proteinExistence type="inferred from homology"/>
<protein>
    <recommendedName>
        <fullName>DNA-directed RNA polymerase subunit beta</fullName>
        <ecNumber>2.7.7.6</ecNumber>
    </recommendedName>
    <alternativeName>
        <fullName>PEP</fullName>
    </alternativeName>
    <alternativeName>
        <fullName>Plastid-encoded RNA polymerase subunit beta</fullName>
        <shortName>RNA polymerase subunit beta</shortName>
    </alternativeName>
</protein>
<name>RPOB_SAPOF</name>
<gene>
    <name type="primary">rpoB</name>
</gene>
<keyword id="KW-0150">Chloroplast</keyword>
<keyword id="KW-0240">DNA-directed RNA polymerase</keyword>
<keyword id="KW-0548">Nucleotidyltransferase</keyword>
<keyword id="KW-0934">Plastid</keyword>
<keyword id="KW-0804">Transcription</keyword>
<keyword id="KW-0808">Transferase</keyword>
<sequence>EKCIVGTGLERQAALDSGVLAIVEHEGKIIYTDTDKIILSGNGDTHSIPLVLYQRFNKNTCMHQNPRIPGGKCIKKGQILADGAATVGGELGLGKNVLVAYMPWEGYNFEDAVLISERLVYEDIYTSFHIRKYEIQTYVTSQGPERVTSEIPHLEAHLLRNLDKNGIVGLGSWVETGDILVGKLTPQMAKESSYAPEDRLLRAILGIQVSTSKETCLKLPIGGRGRVIDVRWIQKKGGSNYNPETIHIYILQKREIKVGDKVAGRHGNKGIISKILPRQDMPYLQDGRPVDMVFNPLGVPSRMNVGQIFECSLGLAGGLLDRHYRITPFDERYEHEASRKLVFSELYQASKQTAKPWIFEPEYPGKSRIFDGRTGDPFEQPVIIGNPYILKLIHQVDDKIHGRSSGHYALVTQQPLR</sequence>
<dbReference type="EC" id="2.7.7.6"/>
<dbReference type="EMBL" id="X07026">
    <property type="protein sequence ID" value="CAA30075.1"/>
    <property type="molecule type" value="Genomic_DNA"/>
</dbReference>
<dbReference type="PIR" id="S00933">
    <property type="entry name" value="S00933"/>
</dbReference>
<dbReference type="SMR" id="P08036"/>
<dbReference type="GO" id="GO:0009507">
    <property type="term" value="C:chloroplast"/>
    <property type="evidence" value="ECO:0007669"/>
    <property type="project" value="UniProtKB-SubCell"/>
</dbReference>
<dbReference type="GO" id="GO:0000428">
    <property type="term" value="C:DNA-directed RNA polymerase complex"/>
    <property type="evidence" value="ECO:0007669"/>
    <property type="project" value="UniProtKB-KW"/>
</dbReference>
<dbReference type="GO" id="GO:0005739">
    <property type="term" value="C:mitochondrion"/>
    <property type="evidence" value="ECO:0007669"/>
    <property type="project" value="GOC"/>
</dbReference>
<dbReference type="GO" id="GO:0003677">
    <property type="term" value="F:DNA binding"/>
    <property type="evidence" value="ECO:0007669"/>
    <property type="project" value="InterPro"/>
</dbReference>
<dbReference type="GO" id="GO:0003899">
    <property type="term" value="F:DNA-directed RNA polymerase activity"/>
    <property type="evidence" value="ECO:0007669"/>
    <property type="project" value="UniProtKB-EC"/>
</dbReference>
<dbReference type="GO" id="GO:0032549">
    <property type="term" value="F:ribonucleoside binding"/>
    <property type="evidence" value="ECO:0007669"/>
    <property type="project" value="InterPro"/>
</dbReference>
<dbReference type="GO" id="GO:0006351">
    <property type="term" value="P:DNA-templated transcription"/>
    <property type="evidence" value="ECO:0007669"/>
    <property type="project" value="InterPro"/>
</dbReference>
<dbReference type="Gene3D" id="2.40.50.100">
    <property type="match status" value="1"/>
</dbReference>
<dbReference type="Gene3D" id="2.40.270.10">
    <property type="entry name" value="DNA-directed RNA polymerase, subunit 2, domain 6"/>
    <property type="match status" value="3"/>
</dbReference>
<dbReference type="InterPro" id="IPR015712">
    <property type="entry name" value="DNA-dir_RNA_pol_su2"/>
</dbReference>
<dbReference type="InterPro" id="IPR007120">
    <property type="entry name" value="DNA-dir_RNAP_su2_dom"/>
</dbReference>
<dbReference type="InterPro" id="IPR037033">
    <property type="entry name" value="DNA-dir_RNAP_su2_hyb_sf"/>
</dbReference>
<dbReference type="InterPro" id="IPR007121">
    <property type="entry name" value="RNA_pol_bsu_CS"/>
</dbReference>
<dbReference type="PANTHER" id="PTHR20856">
    <property type="entry name" value="DNA-DIRECTED RNA POLYMERASE I SUBUNIT 2"/>
    <property type="match status" value="1"/>
</dbReference>
<dbReference type="Pfam" id="PF00562">
    <property type="entry name" value="RNA_pol_Rpb2_6"/>
    <property type="match status" value="1"/>
</dbReference>
<dbReference type="SUPFAM" id="SSF64484">
    <property type="entry name" value="beta and beta-prime subunits of DNA dependent RNA-polymerase"/>
    <property type="match status" value="1"/>
</dbReference>
<dbReference type="PROSITE" id="PS01166">
    <property type="entry name" value="RNA_POL_BETA"/>
    <property type="match status" value="1"/>
</dbReference>